<reference key="1">
    <citation type="journal article" date="2005" name="Science">
        <title>The transcriptional landscape of the mammalian genome.</title>
        <authorList>
            <person name="Carninci P."/>
            <person name="Kasukawa T."/>
            <person name="Katayama S."/>
            <person name="Gough J."/>
            <person name="Frith M.C."/>
            <person name="Maeda N."/>
            <person name="Oyama R."/>
            <person name="Ravasi T."/>
            <person name="Lenhard B."/>
            <person name="Wells C."/>
            <person name="Kodzius R."/>
            <person name="Shimokawa K."/>
            <person name="Bajic V.B."/>
            <person name="Brenner S.E."/>
            <person name="Batalov S."/>
            <person name="Forrest A.R."/>
            <person name="Zavolan M."/>
            <person name="Davis M.J."/>
            <person name="Wilming L.G."/>
            <person name="Aidinis V."/>
            <person name="Allen J.E."/>
            <person name="Ambesi-Impiombato A."/>
            <person name="Apweiler R."/>
            <person name="Aturaliya R.N."/>
            <person name="Bailey T.L."/>
            <person name="Bansal M."/>
            <person name="Baxter L."/>
            <person name="Beisel K.W."/>
            <person name="Bersano T."/>
            <person name="Bono H."/>
            <person name="Chalk A.M."/>
            <person name="Chiu K.P."/>
            <person name="Choudhary V."/>
            <person name="Christoffels A."/>
            <person name="Clutterbuck D.R."/>
            <person name="Crowe M.L."/>
            <person name="Dalla E."/>
            <person name="Dalrymple B.P."/>
            <person name="de Bono B."/>
            <person name="Della Gatta G."/>
            <person name="di Bernardo D."/>
            <person name="Down T."/>
            <person name="Engstrom P."/>
            <person name="Fagiolini M."/>
            <person name="Faulkner G."/>
            <person name="Fletcher C.F."/>
            <person name="Fukushima T."/>
            <person name="Furuno M."/>
            <person name="Futaki S."/>
            <person name="Gariboldi M."/>
            <person name="Georgii-Hemming P."/>
            <person name="Gingeras T.R."/>
            <person name="Gojobori T."/>
            <person name="Green R.E."/>
            <person name="Gustincich S."/>
            <person name="Harbers M."/>
            <person name="Hayashi Y."/>
            <person name="Hensch T.K."/>
            <person name="Hirokawa N."/>
            <person name="Hill D."/>
            <person name="Huminiecki L."/>
            <person name="Iacono M."/>
            <person name="Ikeo K."/>
            <person name="Iwama A."/>
            <person name="Ishikawa T."/>
            <person name="Jakt M."/>
            <person name="Kanapin A."/>
            <person name="Katoh M."/>
            <person name="Kawasawa Y."/>
            <person name="Kelso J."/>
            <person name="Kitamura H."/>
            <person name="Kitano H."/>
            <person name="Kollias G."/>
            <person name="Krishnan S.P."/>
            <person name="Kruger A."/>
            <person name="Kummerfeld S.K."/>
            <person name="Kurochkin I.V."/>
            <person name="Lareau L.F."/>
            <person name="Lazarevic D."/>
            <person name="Lipovich L."/>
            <person name="Liu J."/>
            <person name="Liuni S."/>
            <person name="McWilliam S."/>
            <person name="Madan Babu M."/>
            <person name="Madera M."/>
            <person name="Marchionni L."/>
            <person name="Matsuda H."/>
            <person name="Matsuzawa S."/>
            <person name="Miki H."/>
            <person name="Mignone F."/>
            <person name="Miyake S."/>
            <person name="Morris K."/>
            <person name="Mottagui-Tabar S."/>
            <person name="Mulder N."/>
            <person name="Nakano N."/>
            <person name="Nakauchi H."/>
            <person name="Ng P."/>
            <person name="Nilsson R."/>
            <person name="Nishiguchi S."/>
            <person name="Nishikawa S."/>
            <person name="Nori F."/>
            <person name="Ohara O."/>
            <person name="Okazaki Y."/>
            <person name="Orlando V."/>
            <person name="Pang K.C."/>
            <person name="Pavan W.J."/>
            <person name="Pavesi G."/>
            <person name="Pesole G."/>
            <person name="Petrovsky N."/>
            <person name="Piazza S."/>
            <person name="Reed J."/>
            <person name="Reid J.F."/>
            <person name="Ring B.Z."/>
            <person name="Ringwald M."/>
            <person name="Rost B."/>
            <person name="Ruan Y."/>
            <person name="Salzberg S.L."/>
            <person name="Sandelin A."/>
            <person name="Schneider C."/>
            <person name="Schoenbach C."/>
            <person name="Sekiguchi K."/>
            <person name="Semple C.A."/>
            <person name="Seno S."/>
            <person name="Sessa L."/>
            <person name="Sheng Y."/>
            <person name="Shibata Y."/>
            <person name="Shimada H."/>
            <person name="Shimada K."/>
            <person name="Silva D."/>
            <person name="Sinclair B."/>
            <person name="Sperling S."/>
            <person name="Stupka E."/>
            <person name="Sugiura K."/>
            <person name="Sultana R."/>
            <person name="Takenaka Y."/>
            <person name="Taki K."/>
            <person name="Tammoja K."/>
            <person name="Tan S.L."/>
            <person name="Tang S."/>
            <person name="Taylor M.S."/>
            <person name="Tegner J."/>
            <person name="Teichmann S.A."/>
            <person name="Ueda H.R."/>
            <person name="van Nimwegen E."/>
            <person name="Verardo R."/>
            <person name="Wei C.L."/>
            <person name="Yagi K."/>
            <person name="Yamanishi H."/>
            <person name="Zabarovsky E."/>
            <person name="Zhu S."/>
            <person name="Zimmer A."/>
            <person name="Hide W."/>
            <person name="Bult C."/>
            <person name="Grimmond S.M."/>
            <person name="Teasdale R.D."/>
            <person name="Liu E.T."/>
            <person name="Brusic V."/>
            <person name="Quackenbush J."/>
            <person name="Wahlestedt C."/>
            <person name="Mattick J.S."/>
            <person name="Hume D.A."/>
            <person name="Kai C."/>
            <person name="Sasaki D."/>
            <person name="Tomaru Y."/>
            <person name="Fukuda S."/>
            <person name="Kanamori-Katayama M."/>
            <person name="Suzuki M."/>
            <person name="Aoki J."/>
            <person name="Arakawa T."/>
            <person name="Iida J."/>
            <person name="Imamura K."/>
            <person name="Itoh M."/>
            <person name="Kato T."/>
            <person name="Kawaji H."/>
            <person name="Kawagashira N."/>
            <person name="Kawashima T."/>
            <person name="Kojima M."/>
            <person name="Kondo S."/>
            <person name="Konno H."/>
            <person name="Nakano K."/>
            <person name="Ninomiya N."/>
            <person name="Nishio T."/>
            <person name="Okada M."/>
            <person name="Plessy C."/>
            <person name="Shibata K."/>
            <person name="Shiraki T."/>
            <person name="Suzuki S."/>
            <person name="Tagami M."/>
            <person name="Waki K."/>
            <person name="Watahiki A."/>
            <person name="Okamura-Oho Y."/>
            <person name="Suzuki H."/>
            <person name="Kawai J."/>
            <person name="Hayashizaki Y."/>
        </authorList>
    </citation>
    <scope>NUCLEOTIDE SEQUENCE [LARGE SCALE MRNA]</scope>
    <source>
        <strain>C57BL/6J</strain>
        <tissue>Lung</tissue>
    </source>
</reference>
<reference key="2">
    <citation type="journal article" date="2004" name="Genome Res.">
        <title>The status, quality, and expansion of the NIH full-length cDNA project: the Mammalian Gene Collection (MGC).</title>
        <authorList>
            <consortium name="The MGC Project Team"/>
        </authorList>
    </citation>
    <scope>NUCLEOTIDE SEQUENCE [LARGE SCALE MRNA]</scope>
    <source>
        <tissue>Brain</tissue>
    </source>
</reference>
<reference key="3">
    <citation type="journal article" date="2021" name="Neuron">
        <title>Mutations in Spliceosomal Genes PPIL1 and PRP17 Cause Neurodegenerative Pontocerebellar Hypoplasia with Microcephaly.</title>
        <authorList>
            <person name="Chai G."/>
            <person name="Webb A."/>
            <person name="Li C."/>
            <person name="Antaki D."/>
            <person name="Lee S."/>
            <person name="Breuss M.W."/>
            <person name="Lang N."/>
            <person name="Stanley V."/>
            <person name="Anzenberg P."/>
            <person name="Yang X."/>
            <person name="Marshall T."/>
            <person name="Gaffney P."/>
            <person name="Wierenga K.J."/>
            <person name="Chung B.H."/>
            <person name="Tsang M.H."/>
            <person name="Pais L.S."/>
            <person name="Lovgren A.K."/>
            <person name="VanNoy G.E."/>
            <person name="Rehm H.L."/>
            <person name="Mirzaa G."/>
            <person name="Leon E."/>
            <person name="Diaz J."/>
            <person name="Neumann A."/>
            <person name="Kalverda A.P."/>
            <person name="Manfield I.W."/>
            <person name="Parry D.A."/>
            <person name="Logan C.V."/>
            <person name="Johnson C.A."/>
            <person name="Bonthron D.T."/>
            <person name="Valleley E.M.A."/>
            <person name="Issa M.Y."/>
            <person name="Abdel-Ghafar S.F."/>
            <person name="Abdel-Hamid M.S."/>
            <person name="Jennings P."/>
            <person name="Zaki M.S."/>
            <person name="Sheridan E."/>
            <person name="Gleeson J.G."/>
        </authorList>
    </citation>
    <scope>FUNCTION</scope>
    <scope>MUTAGENESIS OF PRO-95</scope>
</reference>
<proteinExistence type="evidence at protein level"/>
<organism>
    <name type="scientific">Mus musculus</name>
    <name type="common">Mouse</name>
    <dbReference type="NCBI Taxonomy" id="10090"/>
    <lineage>
        <taxon>Eukaryota</taxon>
        <taxon>Metazoa</taxon>
        <taxon>Chordata</taxon>
        <taxon>Craniata</taxon>
        <taxon>Vertebrata</taxon>
        <taxon>Euteleostomi</taxon>
        <taxon>Mammalia</taxon>
        <taxon>Eutheria</taxon>
        <taxon>Euarchontoglires</taxon>
        <taxon>Glires</taxon>
        <taxon>Rodentia</taxon>
        <taxon>Myomorpha</taxon>
        <taxon>Muroidea</taxon>
        <taxon>Muridae</taxon>
        <taxon>Murinae</taxon>
        <taxon>Mus</taxon>
        <taxon>Mus</taxon>
    </lineage>
</organism>
<comment type="function">
    <text evidence="1 3">Required for pre-mRNA splicing as component of the activated spliceosome (By similarity). Plays an important role in embryonic brain development; this function does not require proline peptide bond isomerization (PubMed:33220177).</text>
</comment>
<comment type="subunit">
    <text evidence="1">Component of the catalytic spliceosome C complexes. Component of the postcatalytic spliceosome P complex (By similarity). Interacts with PPIL1; this interaction leads to CDC40 isomerization (By similarity).</text>
</comment>
<comment type="subcellular location">
    <subcellularLocation>
        <location evidence="1">Nucleus</location>
    </subcellularLocation>
    <subcellularLocation>
        <location evidence="1">Nucleus speckle</location>
    </subcellularLocation>
</comment>
<comment type="PTM">
    <text evidence="3">Undergoes isomerization of the peptide bond between Gly-94 and Pro-95. The reaction is catalyzed by PPIL1.</text>
</comment>
<gene>
    <name type="primary">Cdc40</name>
    <name type="synonym">Prp17</name>
    <name type="synonym">Prpf17</name>
</gene>
<evidence type="ECO:0000250" key="1">
    <source>
        <dbReference type="UniProtKB" id="O60508"/>
    </source>
</evidence>
<evidence type="ECO:0000256" key="2">
    <source>
        <dbReference type="SAM" id="MobiDB-lite"/>
    </source>
</evidence>
<evidence type="ECO:0000269" key="3">
    <source>
    </source>
</evidence>
<keyword id="KW-0507">mRNA processing</keyword>
<keyword id="KW-0508">mRNA splicing</keyword>
<keyword id="KW-0539">Nucleus</keyword>
<keyword id="KW-1185">Reference proteome</keyword>
<keyword id="KW-0677">Repeat</keyword>
<keyword id="KW-0747">Spliceosome</keyword>
<keyword id="KW-0853">WD repeat</keyword>
<protein>
    <recommendedName>
        <fullName>Pre-mRNA-processing factor 17</fullName>
    </recommendedName>
    <alternativeName>
        <fullName>Cell division cycle 40 homolog</fullName>
    </alternativeName>
    <alternativeName>
        <fullName>PRP17 homolog</fullName>
    </alternativeName>
</protein>
<dbReference type="EMBL" id="AK004569">
    <property type="protein sequence ID" value="BAB23380.1"/>
    <property type="molecule type" value="mRNA"/>
</dbReference>
<dbReference type="EMBL" id="BC147503">
    <property type="protein sequence ID" value="AAI47504.1"/>
    <property type="molecule type" value="mRNA"/>
</dbReference>
<dbReference type="EMBL" id="BC158078">
    <property type="protein sequence ID" value="AAI58079.1"/>
    <property type="molecule type" value="mRNA"/>
</dbReference>
<dbReference type="CCDS" id="CCDS48546.1"/>
<dbReference type="RefSeq" id="NP_082155.1">
    <property type="nucleotide sequence ID" value="NM_027879.2"/>
</dbReference>
<dbReference type="SMR" id="Q9DC48"/>
<dbReference type="BioGRID" id="214875">
    <property type="interactions" value="2"/>
</dbReference>
<dbReference type="FunCoup" id="Q9DC48">
    <property type="interactions" value="3211"/>
</dbReference>
<dbReference type="STRING" id="10090.ENSMUSP00000044305"/>
<dbReference type="PhosphoSitePlus" id="Q9DC48"/>
<dbReference type="SwissPalm" id="Q9DC48"/>
<dbReference type="CPTAC" id="non-CPTAC-3855"/>
<dbReference type="PaxDb" id="10090-ENSMUSP00000044305"/>
<dbReference type="PeptideAtlas" id="Q9DC48"/>
<dbReference type="ProteomicsDB" id="291663"/>
<dbReference type="Pumba" id="Q9DC48"/>
<dbReference type="Antibodypedia" id="32306">
    <property type="antibodies" value="149 antibodies from 28 providers"/>
</dbReference>
<dbReference type="Ensembl" id="ENSMUST00000044166.9">
    <property type="protein sequence ID" value="ENSMUSP00000044305.8"/>
    <property type="gene ID" value="ENSMUSG00000038446.9"/>
</dbReference>
<dbReference type="GeneID" id="71713"/>
<dbReference type="KEGG" id="mmu:71713"/>
<dbReference type="UCSC" id="uc007exe.3">
    <property type="organism name" value="mouse"/>
</dbReference>
<dbReference type="AGR" id="MGI:1918963"/>
<dbReference type="CTD" id="51362"/>
<dbReference type="MGI" id="MGI:1918963">
    <property type="gene designation" value="Cdc40"/>
</dbReference>
<dbReference type="VEuPathDB" id="HostDB:ENSMUSG00000038446"/>
<dbReference type="eggNOG" id="KOG0282">
    <property type="taxonomic scope" value="Eukaryota"/>
</dbReference>
<dbReference type="GeneTree" id="ENSGT00530000063583"/>
<dbReference type="HOGENOM" id="CLU_022571_2_1_1"/>
<dbReference type="InParanoid" id="Q9DC48"/>
<dbReference type="OMA" id="TLWHPHE"/>
<dbReference type="OrthoDB" id="10257301at2759"/>
<dbReference type="PhylomeDB" id="Q9DC48"/>
<dbReference type="TreeFam" id="TF101064"/>
<dbReference type="Reactome" id="R-MMU-159236">
    <property type="pathway name" value="Transport of Mature mRNA derived from an Intron-Containing Transcript"/>
</dbReference>
<dbReference type="Reactome" id="R-MMU-72163">
    <property type="pathway name" value="mRNA Splicing - Major Pathway"/>
</dbReference>
<dbReference type="Reactome" id="R-MMU-72187">
    <property type="pathway name" value="mRNA 3'-end processing"/>
</dbReference>
<dbReference type="Reactome" id="R-MMU-73856">
    <property type="pathway name" value="RNA Polymerase II Transcription Termination"/>
</dbReference>
<dbReference type="BioGRID-ORCS" id="71713">
    <property type="hits" value="17 hits in 77 CRISPR screens"/>
</dbReference>
<dbReference type="ChiTaRS" id="Cdc40">
    <property type="organism name" value="mouse"/>
</dbReference>
<dbReference type="PRO" id="PR:Q9DC48"/>
<dbReference type="Proteomes" id="UP000000589">
    <property type="component" value="Chromosome 10"/>
</dbReference>
<dbReference type="RNAct" id="Q9DC48">
    <property type="molecule type" value="protein"/>
</dbReference>
<dbReference type="Bgee" id="ENSMUSG00000038446">
    <property type="expression patterns" value="Expressed in manus and 234 other cell types or tissues"/>
</dbReference>
<dbReference type="GO" id="GO:0016607">
    <property type="term" value="C:nuclear speck"/>
    <property type="evidence" value="ECO:0000250"/>
    <property type="project" value="UniProtKB"/>
</dbReference>
<dbReference type="GO" id="GO:0071007">
    <property type="term" value="C:U2-type catalytic step 2 spliceosome"/>
    <property type="evidence" value="ECO:0000250"/>
    <property type="project" value="UniProtKB"/>
</dbReference>
<dbReference type="GO" id="GO:1990403">
    <property type="term" value="P:embryonic brain development"/>
    <property type="evidence" value="ECO:0000250"/>
    <property type="project" value="UniProtKB"/>
</dbReference>
<dbReference type="GO" id="GO:0000398">
    <property type="term" value="P:mRNA splicing, via spliceosome"/>
    <property type="evidence" value="ECO:0000250"/>
    <property type="project" value="UniProtKB"/>
</dbReference>
<dbReference type="CDD" id="cd00200">
    <property type="entry name" value="WD40"/>
    <property type="match status" value="1"/>
</dbReference>
<dbReference type="FunFam" id="2.130.10.10:FF:000034">
    <property type="entry name" value="Pre-mRNA-processing factor 17, putative"/>
    <property type="match status" value="1"/>
</dbReference>
<dbReference type="Gene3D" id="2.130.10.10">
    <property type="entry name" value="YVTN repeat-like/Quinoprotein amine dehydrogenase"/>
    <property type="match status" value="1"/>
</dbReference>
<dbReference type="InterPro" id="IPR032847">
    <property type="entry name" value="PRPF17"/>
</dbReference>
<dbReference type="InterPro" id="IPR015943">
    <property type="entry name" value="WD40/YVTN_repeat-like_dom_sf"/>
</dbReference>
<dbReference type="InterPro" id="IPR019775">
    <property type="entry name" value="WD40_repeat_CS"/>
</dbReference>
<dbReference type="InterPro" id="IPR036322">
    <property type="entry name" value="WD40_repeat_dom_sf"/>
</dbReference>
<dbReference type="InterPro" id="IPR001680">
    <property type="entry name" value="WD40_rpt"/>
</dbReference>
<dbReference type="PANTHER" id="PTHR43979">
    <property type="entry name" value="PRE-MRNA-PROCESSING FACTOR 17"/>
    <property type="match status" value="1"/>
</dbReference>
<dbReference type="PANTHER" id="PTHR43979:SF1">
    <property type="entry name" value="PRE-MRNA-PROCESSING FACTOR 17"/>
    <property type="match status" value="1"/>
</dbReference>
<dbReference type="Pfam" id="PF00400">
    <property type="entry name" value="WD40"/>
    <property type="match status" value="6"/>
</dbReference>
<dbReference type="SMART" id="SM00320">
    <property type="entry name" value="WD40"/>
    <property type="match status" value="7"/>
</dbReference>
<dbReference type="SUPFAM" id="SSF50978">
    <property type="entry name" value="WD40 repeat-like"/>
    <property type="match status" value="1"/>
</dbReference>
<dbReference type="PROSITE" id="PS00678">
    <property type="entry name" value="WD_REPEATS_1"/>
    <property type="match status" value="1"/>
</dbReference>
<dbReference type="PROSITE" id="PS50082">
    <property type="entry name" value="WD_REPEATS_2"/>
    <property type="match status" value="5"/>
</dbReference>
<dbReference type="PROSITE" id="PS50294">
    <property type="entry name" value="WD_REPEATS_REGION"/>
    <property type="match status" value="1"/>
</dbReference>
<feature type="chain" id="PRO_0000051143" description="Pre-mRNA-processing factor 17">
    <location>
        <begin position="1"/>
        <end position="579"/>
    </location>
</feature>
<feature type="repeat" description="WD 1">
    <location>
        <begin position="286"/>
        <end position="326"/>
    </location>
</feature>
<feature type="repeat" description="WD 2">
    <location>
        <begin position="330"/>
        <end position="369"/>
    </location>
</feature>
<feature type="repeat" description="WD 3">
    <location>
        <begin position="371"/>
        <end position="413"/>
    </location>
</feature>
<feature type="repeat" description="WD 4">
    <location>
        <begin position="416"/>
        <end position="455"/>
    </location>
</feature>
<feature type="repeat" description="WD 5">
    <location>
        <begin position="459"/>
        <end position="498"/>
    </location>
</feature>
<feature type="repeat" description="WD 6">
    <location>
        <begin position="504"/>
        <end position="545"/>
    </location>
</feature>
<feature type="repeat" description="WD 7">
    <location>
        <begin position="548"/>
        <end position="578"/>
    </location>
</feature>
<feature type="region of interest" description="Disordered" evidence="2">
    <location>
        <begin position="1"/>
        <end position="34"/>
    </location>
</feature>
<feature type="region of interest" description="Disordered" evidence="2">
    <location>
        <begin position="204"/>
        <end position="237"/>
    </location>
</feature>
<feature type="compositionally biased region" description="Low complexity" evidence="2">
    <location>
        <begin position="1"/>
        <end position="19"/>
    </location>
</feature>
<feature type="mutagenesis site" description="Loss of proline isomerization; no phenotype when introduced in mice, animals are viable and fertile with no microcephaly or defective cortical lamination; no splicing defect." evidence="3">
    <original>P</original>
    <variation>A</variation>
    <location>
        <position position="95"/>
    </location>
</feature>
<name>PRP17_MOUSE</name>
<sequence>MSAAIAALAASYGSGSGSESDSDSEGSRCPLPAADSLMHLTKSPSAKLSLTVAVDSAPEVAVKEDLETGVHLDPAVKEVQYNPTYETMFAPEFGPENPFRTQQMAAPRNMLSGYAEPAHINDFMFEQQRRTFATYGYALDPSLDNHQVSAKYIGSVEEAEKNQGLTVFETGQKKTEKRKKFKENDASNIDGFLGPWAKYVDEKDVAKPSEEEQKELDEITAKRQKKGKQEEEKPGEEKTILHVKEMYDYQGRSYLHIPQDVGVNLRSSVPPEKCYLPKKQIHVWSGHTKGVSAVRLFPLSGHLLLSCSMDCKIKLWEVYGDRRCLRTFIGHSKAVRDICFNTAGTQFLSAAYDRYLKLWDTETGQCISRFTNRKVPYCVKFNPDEDKQNLFVAGMSDKKIVQWDIRSGEIVQEYDRHLGAVNTIVFVDENRRFVSTSDDKSLRVWEWDIPVDFKYIAEPSMHSMPAVTLSPNGKWLACQSMDNQILIFGAQNRFRLNKKKIFKGHMVAGYACQVDFSPDMSYVISGDGNGKLNIWDWKTTKLYSRFKAHDKVCIGAVWHPHETSKVITCGWDGLIKLWD</sequence>
<accession>Q9DC48</accession>
<accession>B2RY33</accession>